<keyword id="KW-0324">Glycolysis</keyword>
<keyword id="KW-0456">Lyase</keyword>
<keyword id="KW-0704">Schiff base</keyword>
<feature type="chain" id="PRO_1000045916" description="Fructose-bisphosphate aldolase class 1">
    <location>
        <begin position="1"/>
        <end position="296"/>
    </location>
</feature>
<feature type="active site" description="Proton acceptor" evidence="1">
    <location>
        <position position="175"/>
    </location>
</feature>
<feature type="active site" description="Schiff-base intermediate with dihydroxyacetone-P" evidence="1">
    <location>
        <position position="212"/>
    </location>
</feature>
<comment type="catalytic activity">
    <reaction evidence="1">
        <text>beta-D-fructose 1,6-bisphosphate = D-glyceraldehyde 3-phosphate + dihydroxyacetone phosphate</text>
        <dbReference type="Rhea" id="RHEA:14729"/>
        <dbReference type="ChEBI" id="CHEBI:32966"/>
        <dbReference type="ChEBI" id="CHEBI:57642"/>
        <dbReference type="ChEBI" id="CHEBI:59776"/>
        <dbReference type="EC" id="4.1.2.13"/>
    </reaction>
</comment>
<comment type="pathway">
    <text evidence="1">Carbohydrate degradation; glycolysis; D-glyceraldehyde 3-phosphate and glycerone phosphate from D-glucose: step 4/4.</text>
</comment>
<comment type="similarity">
    <text evidence="1">Belongs to the class I fructose-bisphosphate aldolase family.</text>
</comment>
<sequence>MNKEQLEKMKNGKGFIAALDQSGGSTPKALKEYGVNEDQYSNEDEMFQLVHDMRTRVVTSPSFSPDKILGAILFEQTMDREVEGKYTADYLADKGVVPFLKVDKGLAEEQNGVQLMKPIDNLDSLLDRANERHIFGTKMRSNILELNEQGIKDVVEQQFEVAKQIIAKGLVPIIEPEVNINAKDKAEIEKVLKAELKKGLDSLNADQLVMLKLTIPTEPNLYKELAEHPNVVRVVVLSGGYSREKANELLKDNDELIASFSRALASDLRADQSKEEFDKALGDAVESIYDASVNKN</sequence>
<proteinExistence type="inferred from homology"/>
<protein>
    <recommendedName>
        <fullName evidence="1">Fructose-bisphosphate aldolase class 1</fullName>
        <ecNumber evidence="1">4.1.2.13</ecNumber>
    </recommendedName>
    <alternativeName>
        <fullName>Fructose-bisphosphate aldolase class I</fullName>
        <shortName evidence="1">FBP aldolase</shortName>
    </alternativeName>
</protein>
<gene>
    <name evidence="1" type="primary">fda</name>
    <name type="ordered locus">SAHV_2590</name>
</gene>
<organism>
    <name type="scientific">Staphylococcus aureus (strain Mu3 / ATCC 700698)</name>
    <dbReference type="NCBI Taxonomy" id="418127"/>
    <lineage>
        <taxon>Bacteria</taxon>
        <taxon>Bacillati</taxon>
        <taxon>Bacillota</taxon>
        <taxon>Bacilli</taxon>
        <taxon>Bacillales</taxon>
        <taxon>Staphylococcaceae</taxon>
        <taxon>Staphylococcus</taxon>
    </lineage>
</organism>
<accession>A7X6Y6</accession>
<name>ALF1_STAA1</name>
<dbReference type="EC" id="4.1.2.13" evidence="1"/>
<dbReference type="EMBL" id="AP009324">
    <property type="protein sequence ID" value="BAF79473.1"/>
    <property type="molecule type" value="Genomic_DNA"/>
</dbReference>
<dbReference type="RefSeq" id="WP_001031409.1">
    <property type="nucleotide sequence ID" value="NC_009782.1"/>
</dbReference>
<dbReference type="SMR" id="A7X6Y6"/>
<dbReference type="KEGG" id="saw:SAHV_2590"/>
<dbReference type="HOGENOM" id="CLU_081560_0_0_9"/>
<dbReference type="UniPathway" id="UPA00109">
    <property type="reaction ID" value="UER00183"/>
</dbReference>
<dbReference type="GO" id="GO:0004332">
    <property type="term" value="F:fructose-bisphosphate aldolase activity"/>
    <property type="evidence" value="ECO:0007669"/>
    <property type="project" value="UniProtKB-UniRule"/>
</dbReference>
<dbReference type="GO" id="GO:0006096">
    <property type="term" value="P:glycolytic process"/>
    <property type="evidence" value="ECO:0007669"/>
    <property type="project" value="UniProtKB-UniRule"/>
</dbReference>
<dbReference type="Gene3D" id="3.20.20.70">
    <property type="entry name" value="Aldolase class I"/>
    <property type="match status" value="1"/>
</dbReference>
<dbReference type="HAMAP" id="MF_00729">
    <property type="entry name" value="FBP_aldolase_1"/>
    <property type="match status" value="1"/>
</dbReference>
<dbReference type="InterPro" id="IPR013785">
    <property type="entry name" value="Aldolase_TIM"/>
</dbReference>
<dbReference type="InterPro" id="IPR000741">
    <property type="entry name" value="FBA_I"/>
</dbReference>
<dbReference type="InterPro" id="IPR023014">
    <property type="entry name" value="FBA_I_Gram+-type"/>
</dbReference>
<dbReference type="NCBIfam" id="NF003784">
    <property type="entry name" value="PRK05377.1"/>
    <property type="match status" value="1"/>
</dbReference>
<dbReference type="PANTHER" id="PTHR11627">
    <property type="entry name" value="FRUCTOSE-BISPHOSPHATE ALDOLASE"/>
    <property type="match status" value="1"/>
</dbReference>
<dbReference type="Pfam" id="PF00274">
    <property type="entry name" value="Glycolytic"/>
    <property type="match status" value="1"/>
</dbReference>
<dbReference type="SUPFAM" id="SSF51569">
    <property type="entry name" value="Aldolase"/>
    <property type="match status" value="1"/>
</dbReference>
<reference key="1">
    <citation type="journal article" date="2008" name="Antimicrob. Agents Chemother.">
        <title>Mutated response regulator graR is responsible for phenotypic conversion of Staphylococcus aureus from heterogeneous vancomycin-intermediate resistance to vancomycin-intermediate resistance.</title>
        <authorList>
            <person name="Neoh H.-M."/>
            <person name="Cui L."/>
            <person name="Yuzawa H."/>
            <person name="Takeuchi F."/>
            <person name="Matsuo M."/>
            <person name="Hiramatsu K."/>
        </authorList>
    </citation>
    <scope>NUCLEOTIDE SEQUENCE [LARGE SCALE GENOMIC DNA]</scope>
    <source>
        <strain>Mu3 / ATCC 700698</strain>
    </source>
</reference>
<evidence type="ECO:0000255" key="1">
    <source>
        <dbReference type="HAMAP-Rule" id="MF_00729"/>
    </source>
</evidence>